<organism>
    <name type="scientific">Mesorhizobium japonicum (strain LMG 29417 / CECT 9101 / MAFF 303099)</name>
    <name type="common">Mesorhizobium loti (strain MAFF 303099)</name>
    <dbReference type="NCBI Taxonomy" id="266835"/>
    <lineage>
        <taxon>Bacteria</taxon>
        <taxon>Pseudomonadati</taxon>
        <taxon>Pseudomonadota</taxon>
        <taxon>Alphaproteobacteria</taxon>
        <taxon>Hyphomicrobiales</taxon>
        <taxon>Phyllobacteriaceae</taxon>
        <taxon>Mesorhizobium</taxon>
    </lineage>
</organism>
<evidence type="ECO:0000255" key="1">
    <source>
        <dbReference type="HAMAP-Rule" id="MF_01106"/>
    </source>
</evidence>
<dbReference type="EC" id="2.3.1.35" evidence="1"/>
<dbReference type="EC" id="2.3.1.1" evidence="1"/>
<dbReference type="EMBL" id="BA000012">
    <property type="protein sequence ID" value="BAB50344.1"/>
    <property type="molecule type" value="Genomic_DNA"/>
</dbReference>
<dbReference type="RefSeq" id="WP_010911690.1">
    <property type="nucleotide sequence ID" value="NC_002678.2"/>
</dbReference>
<dbReference type="SMR" id="Q98G72"/>
<dbReference type="MEROPS" id="T05.001"/>
<dbReference type="GeneID" id="66681876"/>
<dbReference type="KEGG" id="mlo:mll3461"/>
<dbReference type="eggNOG" id="COG1364">
    <property type="taxonomic scope" value="Bacteria"/>
</dbReference>
<dbReference type="HOGENOM" id="CLU_027172_1_0_5"/>
<dbReference type="UniPathway" id="UPA00068">
    <property type="reaction ID" value="UER00106"/>
</dbReference>
<dbReference type="UniPathway" id="UPA00068">
    <property type="reaction ID" value="UER00111"/>
</dbReference>
<dbReference type="Proteomes" id="UP000000552">
    <property type="component" value="Chromosome"/>
</dbReference>
<dbReference type="GO" id="GO:0005737">
    <property type="term" value="C:cytoplasm"/>
    <property type="evidence" value="ECO:0007669"/>
    <property type="project" value="UniProtKB-SubCell"/>
</dbReference>
<dbReference type="GO" id="GO:0004358">
    <property type="term" value="F:glutamate N-acetyltransferase activity"/>
    <property type="evidence" value="ECO:0007669"/>
    <property type="project" value="UniProtKB-UniRule"/>
</dbReference>
<dbReference type="GO" id="GO:0004042">
    <property type="term" value="F:L-glutamate N-acetyltransferase activity"/>
    <property type="evidence" value="ECO:0007669"/>
    <property type="project" value="UniProtKB-UniRule"/>
</dbReference>
<dbReference type="GO" id="GO:0006526">
    <property type="term" value="P:L-arginine biosynthetic process"/>
    <property type="evidence" value="ECO:0007669"/>
    <property type="project" value="UniProtKB-UniRule"/>
</dbReference>
<dbReference type="GO" id="GO:0006592">
    <property type="term" value="P:ornithine biosynthetic process"/>
    <property type="evidence" value="ECO:0007669"/>
    <property type="project" value="TreeGrafter"/>
</dbReference>
<dbReference type="CDD" id="cd02152">
    <property type="entry name" value="OAT"/>
    <property type="match status" value="1"/>
</dbReference>
<dbReference type="FunFam" id="3.10.20.340:FF:000003">
    <property type="entry name" value="Arginine biosynthesis bifunctional protein ArgJ"/>
    <property type="match status" value="1"/>
</dbReference>
<dbReference type="FunFam" id="3.60.70.12:FF:000001">
    <property type="entry name" value="Arginine biosynthesis bifunctional protein ArgJ, chloroplastic"/>
    <property type="match status" value="1"/>
</dbReference>
<dbReference type="Gene3D" id="3.10.20.340">
    <property type="entry name" value="ArgJ beta chain, C-terminal domain"/>
    <property type="match status" value="1"/>
</dbReference>
<dbReference type="Gene3D" id="3.60.70.12">
    <property type="entry name" value="L-amino peptidase D-ALA esterase/amidase"/>
    <property type="match status" value="1"/>
</dbReference>
<dbReference type="HAMAP" id="MF_01106">
    <property type="entry name" value="ArgJ"/>
    <property type="match status" value="1"/>
</dbReference>
<dbReference type="InterPro" id="IPR002813">
    <property type="entry name" value="Arg_biosynth_ArgJ"/>
</dbReference>
<dbReference type="InterPro" id="IPR016117">
    <property type="entry name" value="ArgJ-like_dom_sf"/>
</dbReference>
<dbReference type="InterPro" id="IPR042195">
    <property type="entry name" value="ArgJ_beta_C"/>
</dbReference>
<dbReference type="NCBIfam" id="TIGR00120">
    <property type="entry name" value="ArgJ"/>
    <property type="match status" value="1"/>
</dbReference>
<dbReference type="NCBIfam" id="NF003802">
    <property type="entry name" value="PRK05388.1"/>
    <property type="match status" value="1"/>
</dbReference>
<dbReference type="PANTHER" id="PTHR23100">
    <property type="entry name" value="ARGININE BIOSYNTHESIS BIFUNCTIONAL PROTEIN ARGJ"/>
    <property type="match status" value="1"/>
</dbReference>
<dbReference type="PANTHER" id="PTHR23100:SF0">
    <property type="entry name" value="ARGININE BIOSYNTHESIS BIFUNCTIONAL PROTEIN ARGJ, MITOCHONDRIAL"/>
    <property type="match status" value="1"/>
</dbReference>
<dbReference type="Pfam" id="PF01960">
    <property type="entry name" value="ArgJ"/>
    <property type="match status" value="1"/>
</dbReference>
<dbReference type="SUPFAM" id="SSF56266">
    <property type="entry name" value="DmpA/ArgJ-like"/>
    <property type="match status" value="1"/>
</dbReference>
<proteinExistence type="inferred from homology"/>
<reference key="1">
    <citation type="journal article" date="2000" name="DNA Res.">
        <title>Complete genome structure of the nitrogen-fixing symbiotic bacterium Mesorhizobium loti.</title>
        <authorList>
            <person name="Kaneko T."/>
            <person name="Nakamura Y."/>
            <person name="Sato S."/>
            <person name="Asamizu E."/>
            <person name="Kato T."/>
            <person name="Sasamoto S."/>
            <person name="Watanabe A."/>
            <person name="Idesawa K."/>
            <person name="Ishikawa A."/>
            <person name="Kawashima K."/>
            <person name="Kimura T."/>
            <person name="Kishida Y."/>
            <person name="Kiyokawa C."/>
            <person name="Kohara M."/>
            <person name="Matsumoto M."/>
            <person name="Matsuno A."/>
            <person name="Mochizuki Y."/>
            <person name="Nakayama S."/>
            <person name="Nakazaki N."/>
            <person name="Shimpo S."/>
            <person name="Sugimoto M."/>
            <person name="Takeuchi C."/>
            <person name="Yamada M."/>
            <person name="Tabata S."/>
        </authorList>
    </citation>
    <scope>NUCLEOTIDE SEQUENCE [LARGE SCALE GENOMIC DNA]</scope>
    <source>
        <strain>LMG 29417 / CECT 9101 / MAFF 303099</strain>
    </source>
</reference>
<comment type="function">
    <text evidence="1">Catalyzes two activities which are involved in the cyclic version of arginine biosynthesis: the synthesis of N-acetylglutamate from glutamate and acetyl-CoA as the acetyl donor, and of ornithine by transacetylation between N(2)-acetylornithine and glutamate.</text>
</comment>
<comment type="catalytic activity">
    <reaction evidence="1">
        <text>N(2)-acetyl-L-ornithine + L-glutamate = N-acetyl-L-glutamate + L-ornithine</text>
        <dbReference type="Rhea" id="RHEA:15349"/>
        <dbReference type="ChEBI" id="CHEBI:29985"/>
        <dbReference type="ChEBI" id="CHEBI:44337"/>
        <dbReference type="ChEBI" id="CHEBI:46911"/>
        <dbReference type="ChEBI" id="CHEBI:57805"/>
        <dbReference type="EC" id="2.3.1.35"/>
    </reaction>
</comment>
<comment type="catalytic activity">
    <reaction evidence="1">
        <text>L-glutamate + acetyl-CoA = N-acetyl-L-glutamate + CoA + H(+)</text>
        <dbReference type="Rhea" id="RHEA:24292"/>
        <dbReference type="ChEBI" id="CHEBI:15378"/>
        <dbReference type="ChEBI" id="CHEBI:29985"/>
        <dbReference type="ChEBI" id="CHEBI:44337"/>
        <dbReference type="ChEBI" id="CHEBI:57287"/>
        <dbReference type="ChEBI" id="CHEBI:57288"/>
        <dbReference type="EC" id="2.3.1.1"/>
    </reaction>
</comment>
<comment type="pathway">
    <text evidence="1">Amino-acid biosynthesis; L-arginine biosynthesis; L-ornithine and N-acetyl-L-glutamate from L-glutamate and N(2)-acetyl-L-ornithine (cyclic): step 1/1.</text>
</comment>
<comment type="pathway">
    <text evidence="1">Amino-acid biosynthesis; L-arginine biosynthesis; N(2)-acetyl-L-ornithine from L-glutamate: step 1/4.</text>
</comment>
<comment type="subunit">
    <text evidence="1">Heterotetramer of two alpha and two beta chains.</text>
</comment>
<comment type="subcellular location">
    <subcellularLocation>
        <location evidence="1">Cytoplasm</location>
    </subcellularLocation>
</comment>
<comment type="similarity">
    <text evidence="1">Belongs to the ArgJ family.</text>
</comment>
<name>ARGJ_RHILO</name>
<keyword id="KW-0012">Acyltransferase</keyword>
<keyword id="KW-0028">Amino-acid biosynthesis</keyword>
<keyword id="KW-0055">Arginine biosynthesis</keyword>
<keyword id="KW-0068">Autocatalytic cleavage</keyword>
<keyword id="KW-0963">Cytoplasm</keyword>
<keyword id="KW-0511">Multifunctional enzyme</keyword>
<keyword id="KW-0808">Transferase</keyword>
<protein>
    <recommendedName>
        <fullName evidence="1">Arginine biosynthesis bifunctional protein ArgJ</fullName>
    </recommendedName>
    <domain>
        <recommendedName>
            <fullName evidence="1">Glutamate N-acetyltransferase</fullName>
            <ecNumber evidence="1">2.3.1.35</ecNumber>
        </recommendedName>
        <alternativeName>
            <fullName evidence="1">Ornithine acetyltransferase</fullName>
            <shortName evidence="1">OATase</shortName>
        </alternativeName>
        <alternativeName>
            <fullName evidence="1">Ornithine transacetylase</fullName>
        </alternativeName>
    </domain>
    <domain>
        <recommendedName>
            <fullName evidence="1">Amino-acid acetyltransferase</fullName>
            <ecNumber evidence="1">2.3.1.1</ecNumber>
        </recommendedName>
        <alternativeName>
            <fullName evidence="1">N-acetylglutamate synthase</fullName>
            <shortName evidence="1">AGSase</shortName>
        </alternativeName>
    </domain>
    <component>
        <recommendedName>
            <fullName evidence="1">Arginine biosynthesis bifunctional protein ArgJ alpha chain</fullName>
        </recommendedName>
    </component>
    <component>
        <recommendedName>
            <fullName evidence="1">Arginine biosynthesis bifunctional protein ArgJ beta chain</fullName>
        </recommendedName>
    </component>
</protein>
<accession>Q98G72</accession>
<sequence length="413" mass="43402">MSTTISPLAPKKYPKMPVIEGVRIATAEAGIKYKNRTDLLAMVFDAGTAVAGVFTKSKCPSAPVDFCRQNLAAGKARVLVVNSGNANAFTGKKGRESTALTGEAAAKAAGCTAGEVFLASTGVIGEPLDTTKFSHLLAGLVSDGKPDLWTEAAKAIMTTDTYPKVATQTVKLGDTDVTINGISKGAGMIAPDMATMLSFIATDAPIAAPVLQDLLSRGTAKTFNAVTVDSDTSTSDTLLIFATGKAAKRGAPEITDPKDARLGQFRRALGKVLKSLALQVVRDGEGARKQVEVTVTGAKSARSAKRIALSIANSPLVKTAVAGEDANWGRVVMAVGKAGEPADRDRLSIWFGDIRLAHEGERDPGYSEEATSTYMKRDDIRIRADIGIGRGKATVWTCDLTKEYVAINGDYRS</sequence>
<gene>
    <name evidence="1" type="primary">argJ</name>
    <name type="ordered locus">mll3461</name>
</gene>
<feature type="chain" id="PRO_0000002221" description="Arginine biosynthesis bifunctional protein ArgJ alpha chain" evidence="1">
    <location>
        <begin position="1"/>
        <end position="194"/>
    </location>
</feature>
<feature type="chain" id="PRO_0000002222" description="Arginine biosynthesis bifunctional protein ArgJ beta chain" evidence="1">
    <location>
        <begin position="195"/>
        <end position="413"/>
    </location>
</feature>
<feature type="active site" description="Nucleophile" evidence="1">
    <location>
        <position position="195"/>
    </location>
</feature>
<feature type="binding site" evidence="1">
    <location>
        <position position="158"/>
    </location>
    <ligand>
        <name>substrate</name>
    </ligand>
</feature>
<feature type="binding site" evidence="1">
    <location>
        <position position="184"/>
    </location>
    <ligand>
        <name>substrate</name>
    </ligand>
</feature>
<feature type="binding site" evidence="1">
    <location>
        <position position="195"/>
    </location>
    <ligand>
        <name>substrate</name>
    </ligand>
</feature>
<feature type="binding site" evidence="1">
    <location>
        <position position="285"/>
    </location>
    <ligand>
        <name>substrate</name>
    </ligand>
</feature>
<feature type="binding site" evidence="1">
    <location>
        <position position="408"/>
    </location>
    <ligand>
        <name>substrate</name>
    </ligand>
</feature>
<feature type="binding site" evidence="1">
    <location>
        <position position="413"/>
    </location>
    <ligand>
        <name>substrate</name>
    </ligand>
</feature>
<feature type="site" description="Involved in the stabilization of negative charge on the oxyanion by the formation of the oxyanion hole" evidence="1">
    <location>
        <position position="121"/>
    </location>
</feature>
<feature type="site" description="Involved in the stabilization of negative charge on the oxyanion by the formation of the oxyanion hole" evidence="1">
    <location>
        <position position="122"/>
    </location>
</feature>
<feature type="site" description="Cleavage; by autolysis" evidence="1">
    <location>
        <begin position="194"/>
        <end position="195"/>
    </location>
</feature>